<name>NUDC_HAEIE</name>
<feature type="chain" id="PRO_1000071958" description="NAD-capped RNA hydrolase NudC">
    <location>
        <begin position="1"/>
        <end position="264"/>
    </location>
</feature>
<feature type="domain" description="Nudix hydrolase" evidence="1">
    <location>
        <begin position="126"/>
        <end position="253"/>
    </location>
</feature>
<feature type="short sequence motif" description="Nudix box" evidence="1">
    <location>
        <begin position="163"/>
        <end position="184"/>
    </location>
</feature>
<feature type="binding site" evidence="1">
    <location>
        <position position="70"/>
    </location>
    <ligand>
        <name>substrate</name>
    </ligand>
</feature>
<feature type="binding site" evidence="1">
    <location>
        <position position="99"/>
    </location>
    <ligand>
        <name>Zn(2+)</name>
        <dbReference type="ChEBI" id="CHEBI:29105"/>
    </ligand>
</feature>
<feature type="binding site" evidence="1">
    <location>
        <position position="102"/>
    </location>
    <ligand>
        <name>Zn(2+)</name>
        <dbReference type="ChEBI" id="CHEBI:29105"/>
    </ligand>
</feature>
<feature type="binding site" evidence="1">
    <location>
        <position position="112"/>
    </location>
    <ligand>
        <name>substrate</name>
    </ligand>
</feature>
<feature type="binding site" evidence="1">
    <location>
        <position position="117"/>
    </location>
    <ligand>
        <name>Zn(2+)</name>
        <dbReference type="ChEBI" id="CHEBI:29105"/>
    </ligand>
</feature>
<feature type="binding site" evidence="1">
    <location>
        <position position="120"/>
    </location>
    <ligand>
        <name>Zn(2+)</name>
        <dbReference type="ChEBI" id="CHEBI:29105"/>
    </ligand>
</feature>
<feature type="binding site" evidence="1">
    <location>
        <position position="125"/>
    </location>
    <ligand>
        <name>substrate</name>
    </ligand>
</feature>
<feature type="binding site" evidence="1">
    <location>
        <position position="162"/>
    </location>
    <ligand>
        <name>a divalent metal cation</name>
        <dbReference type="ChEBI" id="CHEBI:60240"/>
        <label>1</label>
    </ligand>
</feature>
<feature type="binding site" evidence="1">
    <location>
        <position position="178"/>
    </location>
    <ligand>
        <name>a divalent metal cation</name>
        <dbReference type="ChEBI" id="CHEBI:60240"/>
        <label>2</label>
    </ligand>
</feature>
<feature type="binding site" evidence="1">
    <location>
        <position position="178"/>
    </location>
    <ligand>
        <name>a divalent metal cation</name>
        <dbReference type="ChEBI" id="CHEBI:60240"/>
        <label>3</label>
    </ligand>
</feature>
<feature type="binding site" evidence="1">
    <location>
        <position position="182"/>
    </location>
    <ligand>
        <name>a divalent metal cation</name>
        <dbReference type="ChEBI" id="CHEBI:60240"/>
        <label>1</label>
    </ligand>
</feature>
<feature type="binding site" evidence="1">
    <location>
        <position position="182"/>
    </location>
    <ligand>
        <name>a divalent metal cation</name>
        <dbReference type="ChEBI" id="CHEBI:60240"/>
        <label>3</label>
    </ligand>
</feature>
<feature type="binding site" evidence="1">
    <location>
        <begin position="196"/>
        <end position="203"/>
    </location>
    <ligand>
        <name>substrate</name>
    </ligand>
</feature>
<feature type="binding site" evidence="1">
    <location>
        <position position="223"/>
    </location>
    <ligand>
        <name>a divalent metal cation</name>
        <dbReference type="ChEBI" id="CHEBI:60240"/>
        <label>1</label>
    </ligand>
</feature>
<feature type="binding site" evidence="1">
    <location>
        <position position="223"/>
    </location>
    <ligand>
        <name>a divalent metal cation</name>
        <dbReference type="ChEBI" id="CHEBI:60240"/>
        <label>3</label>
    </ligand>
</feature>
<feature type="binding site" evidence="1">
    <location>
        <position position="246"/>
    </location>
    <ligand>
        <name>substrate</name>
    </ligand>
</feature>
<proteinExistence type="inferred from homology"/>
<organism>
    <name type="scientific">Haemophilus influenzae (strain PittEE)</name>
    <dbReference type="NCBI Taxonomy" id="374930"/>
    <lineage>
        <taxon>Bacteria</taxon>
        <taxon>Pseudomonadati</taxon>
        <taxon>Pseudomonadota</taxon>
        <taxon>Gammaproteobacteria</taxon>
        <taxon>Pasteurellales</taxon>
        <taxon>Pasteurellaceae</taxon>
        <taxon>Haemophilus</taxon>
    </lineage>
</organism>
<dbReference type="EC" id="3.6.1.-" evidence="1"/>
<dbReference type="EC" id="3.6.1.22" evidence="1"/>
<dbReference type="EMBL" id="CP000671">
    <property type="protein sequence ID" value="ABQ97658.1"/>
    <property type="molecule type" value="Genomic_DNA"/>
</dbReference>
<dbReference type="SMR" id="A5UA57"/>
<dbReference type="KEGG" id="hip:CGSHiEE_00830"/>
<dbReference type="HOGENOM" id="CLU_037162_0_1_6"/>
<dbReference type="GO" id="GO:0005829">
    <property type="term" value="C:cytosol"/>
    <property type="evidence" value="ECO:0007669"/>
    <property type="project" value="TreeGrafter"/>
</dbReference>
<dbReference type="GO" id="GO:0000287">
    <property type="term" value="F:magnesium ion binding"/>
    <property type="evidence" value="ECO:0007669"/>
    <property type="project" value="UniProtKB-UniRule"/>
</dbReference>
<dbReference type="GO" id="GO:0030145">
    <property type="term" value="F:manganese ion binding"/>
    <property type="evidence" value="ECO:0007669"/>
    <property type="project" value="UniProtKB-UniRule"/>
</dbReference>
<dbReference type="GO" id="GO:0000210">
    <property type="term" value="F:NAD+ diphosphatase activity"/>
    <property type="evidence" value="ECO:0007669"/>
    <property type="project" value="UniProtKB-UniRule"/>
</dbReference>
<dbReference type="GO" id="GO:0035529">
    <property type="term" value="F:NADH pyrophosphatase activity"/>
    <property type="evidence" value="ECO:0007669"/>
    <property type="project" value="TreeGrafter"/>
</dbReference>
<dbReference type="GO" id="GO:0110153">
    <property type="term" value="F:RNA NAD-cap (NMN-forming) hydrolase activity"/>
    <property type="evidence" value="ECO:0007669"/>
    <property type="project" value="RHEA"/>
</dbReference>
<dbReference type="GO" id="GO:0008270">
    <property type="term" value="F:zinc ion binding"/>
    <property type="evidence" value="ECO:0007669"/>
    <property type="project" value="UniProtKB-UniRule"/>
</dbReference>
<dbReference type="GO" id="GO:0019677">
    <property type="term" value="P:NAD catabolic process"/>
    <property type="evidence" value="ECO:0007669"/>
    <property type="project" value="TreeGrafter"/>
</dbReference>
<dbReference type="GO" id="GO:0006734">
    <property type="term" value="P:NADH metabolic process"/>
    <property type="evidence" value="ECO:0007669"/>
    <property type="project" value="TreeGrafter"/>
</dbReference>
<dbReference type="GO" id="GO:0006742">
    <property type="term" value="P:NADP catabolic process"/>
    <property type="evidence" value="ECO:0007669"/>
    <property type="project" value="TreeGrafter"/>
</dbReference>
<dbReference type="CDD" id="cd03429">
    <property type="entry name" value="NUDIX_NADH_pyrophosphatase_Nudt13"/>
    <property type="match status" value="1"/>
</dbReference>
<dbReference type="FunFam" id="3.90.79.10:FF:000004">
    <property type="entry name" value="NADH pyrophosphatase"/>
    <property type="match status" value="1"/>
</dbReference>
<dbReference type="Gene3D" id="3.90.79.20">
    <property type="match status" value="1"/>
</dbReference>
<dbReference type="Gene3D" id="3.90.79.10">
    <property type="entry name" value="Nucleoside Triphosphate Pyrophosphohydrolase"/>
    <property type="match status" value="1"/>
</dbReference>
<dbReference type="HAMAP" id="MF_00297">
    <property type="entry name" value="Nudix_NudC"/>
    <property type="match status" value="1"/>
</dbReference>
<dbReference type="InterPro" id="IPR050241">
    <property type="entry name" value="NAD-cap_RNA_hydrolase_NudC"/>
</dbReference>
<dbReference type="InterPro" id="IPR049734">
    <property type="entry name" value="NudC-like_C"/>
</dbReference>
<dbReference type="InterPro" id="IPR015797">
    <property type="entry name" value="NUDIX_hydrolase-like_dom_sf"/>
</dbReference>
<dbReference type="InterPro" id="IPR020084">
    <property type="entry name" value="NUDIX_hydrolase_CS"/>
</dbReference>
<dbReference type="InterPro" id="IPR000086">
    <property type="entry name" value="NUDIX_hydrolase_dom"/>
</dbReference>
<dbReference type="InterPro" id="IPR022925">
    <property type="entry name" value="RNA_Hydrolase_NudC"/>
</dbReference>
<dbReference type="InterPro" id="IPR015376">
    <property type="entry name" value="Znr_NADH_PPase"/>
</dbReference>
<dbReference type="NCBIfam" id="NF001299">
    <property type="entry name" value="PRK00241.1"/>
    <property type="match status" value="1"/>
</dbReference>
<dbReference type="PANTHER" id="PTHR42904:SF6">
    <property type="entry name" value="NAD-CAPPED RNA HYDROLASE NUDT12"/>
    <property type="match status" value="1"/>
</dbReference>
<dbReference type="PANTHER" id="PTHR42904">
    <property type="entry name" value="NUDIX HYDROLASE, NUDC SUBFAMILY"/>
    <property type="match status" value="1"/>
</dbReference>
<dbReference type="Pfam" id="PF00293">
    <property type="entry name" value="NUDIX"/>
    <property type="match status" value="1"/>
</dbReference>
<dbReference type="Pfam" id="PF09297">
    <property type="entry name" value="Zn_ribbon_NUD"/>
    <property type="match status" value="1"/>
</dbReference>
<dbReference type="SUPFAM" id="SSF55811">
    <property type="entry name" value="Nudix"/>
    <property type="match status" value="2"/>
</dbReference>
<dbReference type="PROSITE" id="PS51462">
    <property type="entry name" value="NUDIX"/>
    <property type="match status" value="1"/>
</dbReference>
<dbReference type="PROSITE" id="PS00893">
    <property type="entry name" value="NUDIX_BOX"/>
    <property type="match status" value="1"/>
</dbReference>
<evidence type="ECO:0000255" key="1">
    <source>
        <dbReference type="HAMAP-Rule" id="MF_00297"/>
    </source>
</evidence>
<reference key="1">
    <citation type="journal article" date="2007" name="Genome Biol.">
        <title>Characterization and modeling of the Haemophilus influenzae core and supragenomes based on the complete genomic sequences of Rd and 12 clinical nontypeable strains.</title>
        <authorList>
            <person name="Hogg J.S."/>
            <person name="Hu F.Z."/>
            <person name="Janto B."/>
            <person name="Boissy R."/>
            <person name="Hayes J."/>
            <person name="Keefe R."/>
            <person name="Post J.C."/>
            <person name="Ehrlich G.D."/>
        </authorList>
    </citation>
    <scope>NUCLEOTIDE SEQUENCE [LARGE SCALE GENOMIC DNA]</scope>
    <source>
        <strain>PittEE</strain>
    </source>
</reference>
<accession>A5UA57</accession>
<protein>
    <recommendedName>
        <fullName evidence="1">NAD-capped RNA hydrolase NudC</fullName>
        <shortName evidence="1">DeNADding enzyme NudC</shortName>
        <ecNumber evidence="1">3.6.1.-</ecNumber>
    </recommendedName>
    <alternativeName>
        <fullName evidence="1">NADH pyrophosphatase</fullName>
        <ecNumber evidence="1">3.6.1.22</ecNumber>
    </alternativeName>
</protein>
<sequence length="264" mass="30206">MKILQQDDFGYWLLTQGSNLYLVNNELPFGIAKDIDLEGLQAMQIGEWKNHPLWLVAEQESDEREYVSLRNLLSLPEDEFHILSRGVEINHFLKTHKFCGKCGHKTQQTQDELAVQCIHCGYQTYPVICPSIIVAVRRGHEILLANHKRHYSPNGGIYTTLAGFVEVGETFEQAVQREVFEETGISIKNLRYFGSQPWAFPNSQMVGFLADYESGEITLQESEIHDAQWFSYDQPLPELPPTGTIARKLIHVTLELCKAEHKCD</sequence>
<gene>
    <name evidence="1" type="primary">nudC</name>
    <name type="ordered locus">CGSHiEE_00830</name>
</gene>
<comment type="function">
    <text evidence="1">mRNA decapping enzyme that specifically removes the nicotinamide adenine dinucleotide (NAD) cap from a subset of mRNAs by hydrolyzing the diphosphate linkage to produce nicotinamide mononucleotide (NMN) and 5' monophosphate mRNA. The NAD-cap is present at the 5'-end of some mRNAs and stabilizes RNA against 5'-processing. Has preference for mRNAs with a 5'-end purine. Catalyzes the hydrolysis of a broad range of dinucleotide pyrophosphates.</text>
</comment>
<comment type="catalytic activity">
    <reaction evidence="1">
        <text>a 5'-end NAD(+)-phospho-ribonucleoside in mRNA + H2O = a 5'-end phospho-adenosine-phospho-ribonucleoside in mRNA + beta-nicotinamide D-ribonucleotide + 2 H(+)</text>
        <dbReference type="Rhea" id="RHEA:60876"/>
        <dbReference type="Rhea" id="RHEA-COMP:15698"/>
        <dbReference type="Rhea" id="RHEA-COMP:15719"/>
        <dbReference type="ChEBI" id="CHEBI:14649"/>
        <dbReference type="ChEBI" id="CHEBI:15377"/>
        <dbReference type="ChEBI" id="CHEBI:15378"/>
        <dbReference type="ChEBI" id="CHEBI:144029"/>
        <dbReference type="ChEBI" id="CHEBI:144051"/>
    </reaction>
    <physiologicalReaction direction="left-to-right" evidence="1">
        <dbReference type="Rhea" id="RHEA:60877"/>
    </physiologicalReaction>
</comment>
<comment type="catalytic activity">
    <reaction evidence="1">
        <text>NAD(+) + H2O = beta-nicotinamide D-ribonucleotide + AMP + 2 H(+)</text>
        <dbReference type="Rhea" id="RHEA:11800"/>
        <dbReference type="ChEBI" id="CHEBI:14649"/>
        <dbReference type="ChEBI" id="CHEBI:15377"/>
        <dbReference type="ChEBI" id="CHEBI:15378"/>
        <dbReference type="ChEBI" id="CHEBI:57540"/>
        <dbReference type="ChEBI" id="CHEBI:456215"/>
        <dbReference type="EC" id="3.6.1.22"/>
    </reaction>
</comment>
<comment type="catalytic activity">
    <reaction evidence="1">
        <text>NADH + H2O = reduced beta-nicotinamide D-ribonucleotide + AMP + 2 H(+)</text>
        <dbReference type="Rhea" id="RHEA:48868"/>
        <dbReference type="ChEBI" id="CHEBI:15377"/>
        <dbReference type="ChEBI" id="CHEBI:15378"/>
        <dbReference type="ChEBI" id="CHEBI:57945"/>
        <dbReference type="ChEBI" id="CHEBI:90832"/>
        <dbReference type="ChEBI" id="CHEBI:456215"/>
        <dbReference type="EC" id="3.6.1.22"/>
    </reaction>
</comment>
<comment type="cofactor">
    <cofactor evidence="1">
        <name>Mg(2+)</name>
        <dbReference type="ChEBI" id="CHEBI:18420"/>
    </cofactor>
    <cofactor evidence="1">
        <name>Mn(2+)</name>
        <dbReference type="ChEBI" id="CHEBI:29035"/>
    </cofactor>
    <text evidence="1">Divalent metal cations. Mg(2+) or Mn(2+).</text>
</comment>
<comment type="cofactor">
    <cofactor evidence="1">
        <name>Zn(2+)</name>
        <dbReference type="ChEBI" id="CHEBI:29105"/>
    </cofactor>
    <text evidence="1">Binds 1 zinc ion per subunit.</text>
</comment>
<comment type="subunit">
    <text evidence="1">Homodimer.</text>
</comment>
<comment type="similarity">
    <text evidence="1">Belongs to the Nudix hydrolase family. NudC subfamily.</text>
</comment>
<keyword id="KW-0378">Hydrolase</keyword>
<keyword id="KW-0460">Magnesium</keyword>
<keyword id="KW-0464">Manganese</keyword>
<keyword id="KW-0479">Metal-binding</keyword>
<keyword id="KW-0520">NAD</keyword>
<keyword id="KW-0862">Zinc</keyword>